<comment type="function">
    <text evidence="1">Reduces FMN, organic nitro compounds and disulfide DTNB. Involved in maintenance of the cellular redox state and the disulfide stress response (By similarity).</text>
</comment>
<comment type="cofactor">
    <cofactor evidence="1">
        <name>FMN</name>
        <dbReference type="ChEBI" id="CHEBI:58210"/>
    </cofactor>
</comment>
<comment type="similarity">
    <text evidence="2">Belongs to the flavin oxidoreductase frp family.</text>
</comment>
<protein>
    <recommendedName>
        <fullName>NADPH-dependent oxidoreductase</fullName>
        <ecNumber>1.6.-.-</ecNumber>
    </recommendedName>
</protein>
<reference key="1">
    <citation type="journal article" date="2001" name="Lancet">
        <title>Whole genome sequencing of meticillin-resistant Staphylococcus aureus.</title>
        <authorList>
            <person name="Kuroda M."/>
            <person name="Ohta T."/>
            <person name="Uchiyama I."/>
            <person name="Baba T."/>
            <person name="Yuzawa H."/>
            <person name="Kobayashi I."/>
            <person name="Cui L."/>
            <person name="Oguchi A."/>
            <person name="Aoki K."/>
            <person name="Nagai Y."/>
            <person name="Lian J.-Q."/>
            <person name="Ito T."/>
            <person name="Kanamori M."/>
            <person name="Matsumaru H."/>
            <person name="Maruyama A."/>
            <person name="Murakami H."/>
            <person name="Hosoyama A."/>
            <person name="Mizutani-Ui Y."/>
            <person name="Takahashi N.K."/>
            <person name="Sawano T."/>
            <person name="Inoue R."/>
            <person name="Kaito C."/>
            <person name="Sekimizu K."/>
            <person name="Hirakawa H."/>
            <person name="Kuhara S."/>
            <person name="Goto S."/>
            <person name="Yabuzaki J."/>
            <person name="Kanehisa M."/>
            <person name="Yamashita A."/>
            <person name="Oshima K."/>
            <person name="Furuya K."/>
            <person name="Yoshino C."/>
            <person name="Shiba T."/>
            <person name="Hattori M."/>
            <person name="Ogasawara N."/>
            <person name="Hayashi H."/>
            <person name="Hiramatsu K."/>
        </authorList>
    </citation>
    <scope>NUCLEOTIDE SEQUENCE [LARGE SCALE GENOMIC DNA]</scope>
    <source>
        <strain>N315</strain>
    </source>
</reference>
<feature type="chain" id="PRO_0000239307" description="NADPH-dependent oxidoreductase">
    <location>
        <begin position="1"/>
        <end position="251"/>
    </location>
</feature>
<organism>
    <name type="scientific">Staphylococcus aureus (strain N315)</name>
    <dbReference type="NCBI Taxonomy" id="158879"/>
    <lineage>
        <taxon>Bacteria</taxon>
        <taxon>Bacillati</taxon>
        <taxon>Bacillota</taxon>
        <taxon>Bacilli</taxon>
        <taxon>Bacillales</taxon>
        <taxon>Staphylococcaceae</taxon>
        <taxon>Staphylococcus</taxon>
    </lineage>
</organism>
<proteinExistence type="inferred from homology"/>
<accession>Q7A7J0</accession>
<sequence>MSDYVYNLVKKHHSVRKFKNKPLSEDVVKKLVEAGQSASTSSFLQAYSIIGIDDEKIKENLREVSGQPYVVENGYLFVFVIDYYRHHLVDQHAETDMENAYGSTEGLLVGAIDAALVAENIAVTAEDMGYGIVFLGSLRNDVERVREILDLPDYVFPVFGMAVGEPADDENGAAKPRLPFDHVFHHNKYHADKETQYAQMADYDQTISEYYDQRTNGNRKETWSQQIEMFLGNKARLDMLEQLQKSGLIQR</sequence>
<name>NFRA_STAAN</name>
<keyword id="KW-0285">Flavoprotein</keyword>
<keyword id="KW-0288">FMN</keyword>
<keyword id="KW-0521">NADP</keyword>
<keyword id="KW-0560">Oxidoreductase</keyword>
<evidence type="ECO:0000250" key="1"/>
<evidence type="ECO:0000305" key="2"/>
<dbReference type="EC" id="1.6.-.-"/>
<dbReference type="EMBL" id="BA000018">
    <property type="protein sequence ID" value="BAB41594.1"/>
    <property type="molecule type" value="Genomic_DNA"/>
</dbReference>
<dbReference type="PIR" id="G89804">
    <property type="entry name" value="G89804"/>
</dbReference>
<dbReference type="SMR" id="Q7A7J0"/>
<dbReference type="EnsemblBacteria" id="BAB41594">
    <property type="protein sequence ID" value="BAB41594"/>
    <property type="gene ID" value="BAB41594"/>
</dbReference>
<dbReference type="KEGG" id="sau:SA0367"/>
<dbReference type="HOGENOM" id="CLU_070764_0_0_9"/>
<dbReference type="GO" id="GO:0016491">
    <property type="term" value="F:oxidoreductase activity"/>
    <property type="evidence" value="ECO:0007669"/>
    <property type="project" value="UniProtKB-KW"/>
</dbReference>
<dbReference type="CDD" id="cd02146">
    <property type="entry name" value="NfsA-like"/>
    <property type="match status" value="1"/>
</dbReference>
<dbReference type="Gene3D" id="3.40.109.10">
    <property type="entry name" value="NADH Oxidase"/>
    <property type="match status" value="1"/>
</dbReference>
<dbReference type="InterPro" id="IPR016446">
    <property type="entry name" value="Flavin_OxRdtase_Frp"/>
</dbReference>
<dbReference type="InterPro" id="IPR029479">
    <property type="entry name" value="Nitroreductase"/>
</dbReference>
<dbReference type="InterPro" id="IPR000415">
    <property type="entry name" value="Nitroreductase-like"/>
</dbReference>
<dbReference type="NCBIfam" id="NF008033">
    <property type="entry name" value="PRK10765.1"/>
    <property type="match status" value="1"/>
</dbReference>
<dbReference type="PANTHER" id="PTHR43425:SF3">
    <property type="entry name" value="NADPH-DEPENDENT OXIDOREDUCTASE"/>
    <property type="match status" value="1"/>
</dbReference>
<dbReference type="PANTHER" id="PTHR43425">
    <property type="entry name" value="OXYGEN-INSENSITIVE NADPH NITROREDUCTASE"/>
    <property type="match status" value="1"/>
</dbReference>
<dbReference type="Pfam" id="PF00881">
    <property type="entry name" value="Nitroreductase"/>
    <property type="match status" value="1"/>
</dbReference>
<dbReference type="PIRSF" id="PIRSF005426">
    <property type="entry name" value="Frp"/>
    <property type="match status" value="1"/>
</dbReference>
<dbReference type="SUPFAM" id="SSF55469">
    <property type="entry name" value="FMN-dependent nitroreductase-like"/>
    <property type="match status" value="1"/>
</dbReference>
<gene>
    <name type="primary">nfrA</name>
    <name type="ordered locus">SA0367</name>
</gene>